<feature type="chain" id="PRO_1000131878" description="4-deoxy-L-threo-5-hexosulose-uronate ketol-isomerase">
    <location>
        <begin position="1"/>
        <end position="278"/>
    </location>
</feature>
<feature type="binding site" evidence="1">
    <location>
        <position position="196"/>
    </location>
    <ligand>
        <name>Zn(2+)</name>
        <dbReference type="ChEBI" id="CHEBI:29105"/>
    </ligand>
</feature>
<feature type="binding site" evidence="1">
    <location>
        <position position="198"/>
    </location>
    <ligand>
        <name>Zn(2+)</name>
        <dbReference type="ChEBI" id="CHEBI:29105"/>
    </ligand>
</feature>
<feature type="binding site" evidence="1">
    <location>
        <position position="203"/>
    </location>
    <ligand>
        <name>Zn(2+)</name>
        <dbReference type="ChEBI" id="CHEBI:29105"/>
    </ligand>
</feature>
<feature type="binding site" evidence="1">
    <location>
        <position position="245"/>
    </location>
    <ligand>
        <name>Zn(2+)</name>
        <dbReference type="ChEBI" id="CHEBI:29105"/>
    </ligand>
</feature>
<proteinExistence type="inferred from homology"/>
<dbReference type="EC" id="5.3.1.17" evidence="1"/>
<dbReference type="EMBL" id="CU928161">
    <property type="protein sequence ID" value="CAR04378.1"/>
    <property type="molecule type" value="Genomic_DNA"/>
</dbReference>
<dbReference type="RefSeq" id="WP_000383248.1">
    <property type="nucleotide sequence ID" value="NC_011742.1"/>
</dbReference>
<dbReference type="SMR" id="B7MM49"/>
<dbReference type="GeneID" id="75172927"/>
<dbReference type="KEGG" id="ecz:ECS88_3140"/>
<dbReference type="HOGENOM" id="CLU_062609_0_0_6"/>
<dbReference type="UniPathway" id="UPA00545">
    <property type="reaction ID" value="UER00826"/>
</dbReference>
<dbReference type="Proteomes" id="UP000000747">
    <property type="component" value="Chromosome"/>
</dbReference>
<dbReference type="GO" id="GO:0008697">
    <property type="term" value="F:4-deoxy-L-threo-5-hexosulose-uronate ketol-isomerase activity"/>
    <property type="evidence" value="ECO:0007669"/>
    <property type="project" value="UniProtKB-UniRule"/>
</dbReference>
<dbReference type="GO" id="GO:0008270">
    <property type="term" value="F:zinc ion binding"/>
    <property type="evidence" value="ECO:0007669"/>
    <property type="project" value="UniProtKB-UniRule"/>
</dbReference>
<dbReference type="GO" id="GO:0019698">
    <property type="term" value="P:D-galacturonate catabolic process"/>
    <property type="evidence" value="ECO:0007669"/>
    <property type="project" value="TreeGrafter"/>
</dbReference>
<dbReference type="GO" id="GO:0042840">
    <property type="term" value="P:D-glucuronate catabolic process"/>
    <property type="evidence" value="ECO:0007669"/>
    <property type="project" value="TreeGrafter"/>
</dbReference>
<dbReference type="GO" id="GO:0045490">
    <property type="term" value="P:pectin catabolic process"/>
    <property type="evidence" value="ECO:0007669"/>
    <property type="project" value="UniProtKB-UniRule"/>
</dbReference>
<dbReference type="CDD" id="cd20491">
    <property type="entry name" value="cupin_KduI_C"/>
    <property type="match status" value="1"/>
</dbReference>
<dbReference type="CDD" id="cd20294">
    <property type="entry name" value="cupin_KduI_N"/>
    <property type="match status" value="1"/>
</dbReference>
<dbReference type="FunFam" id="2.60.120.10:FF:000018">
    <property type="entry name" value="4-deoxy-L-threo-5-hexosulose-uronate ketol-isomerase"/>
    <property type="match status" value="1"/>
</dbReference>
<dbReference type="FunFam" id="2.60.120.520:FF:000001">
    <property type="entry name" value="4-deoxy-L-threo-5-hexosulose-uronate ketol-isomerase"/>
    <property type="match status" value="1"/>
</dbReference>
<dbReference type="Gene3D" id="2.60.120.10">
    <property type="entry name" value="Jelly Rolls"/>
    <property type="match status" value="1"/>
</dbReference>
<dbReference type="Gene3D" id="2.60.120.520">
    <property type="entry name" value="pectin degrading enzyme 5-keto 4- deoxyuronate isomerase, domain 1"/>
    <property type="match status" value="1"/>
</dbReference>
<dbReference type="HAMAP" id="MF_00687">
    <property type="entry name" value="KduI"/>
    <property type="match status" value="1"/>
</dbReference>
<dbReference type="InterPro" id="IPR007045">
    <property type="entry name" value="KduI"/>
</dbReference>
<dbReference type="InterPro" id="IPR021120">
    <property type="entry name" value="KduI/IolB_isomerase"/>
</dbReference>
<dbReference type="InterPro" id="IPR027449">
    <property type="entry name" value="KduI_N"/>
</dbReference>
<dbReference type="InterPro" id="IPR014710">
    <property type="entry name" value="RmlC-like_jellyroll"/>
</dbReference>
<dbReference type="InterPro" id="IPR011051">
    <property type="entry name" value="RmlC_Cupin_sf"/>
</dbReference>
<dbReference type="NCBIfam" id="NF002091">
    <property type="entry name" value="PRK00924.1"/>
    <property type="match status" value="1"/>
</dbReference>
<dbReference type="PANTHER" id="PTHR38461">
    <property type="entry name" value="4-DEOXY-L-THREO-5-HEXOSULOSE-URONATE KETOL-ISOMERASE"/>
    <property type="match status" value="1"/>
</dbReference>
<dbReference type="PANTHER" id="PTHR38461:SF1">
    <property type="entry name" value="4-DEOXY-L-THREO-5-HEXOSULOSE-URONATE KETOL-ISOMERASE"/>
    <property type="match status" value="1"/>
</dbReference>
<dbReference type="Pfam" id="PF04962">
    <property type="entry name" value="KduI"/>
    <property type="match status" value="1"/>
</dbReference>
<dbReference type="PIRSF" id="PIRSF006625">
    <property type="entry name" value="KduI"/>
    <property type="match status" value="1"/>
</dbReference>
<dbReference type="SUPFAM" id="SSF51182">
    <property type="entry name" value="RmlC-like cupins"/>
    <property type="match status" value="1"/>
</dbReference>
<keyword id="KW-0413">Isomerase</keyword>
<keyword id="KW-0479">Metal-binding</keyword>
<keyword id="KW-1185">Reference proteome</keyword>
<keyword id="KW-0862">Zinc</keyword>
<reference key="1">
    <citation type="journal article" date="2009" name="PLoS Genet.">
        <title>Organised genome dynamics in the Escherichia coli species results in highly diverse adaptive paths.</title>
        <authorList>
            <person name="Touchon M."/>
            <person name="Hoede C."/>
            <person name="Tenaillon O."/>
            <person name="Barbe V."/>
            <person name="Baeriswyl S."/>
            <person name="Bidet P."/>
            <person name="Bingen E."/>
            <person name="Bonacorsi S."/>
            <person name="Bouchier C."/>
            <person name="Bouvet O."/>
            <person name="Calteau A."/>
            <person name="Chiapello H."/>
            <person name="Clermont O."/>
            <person name="Cruveiller S."/>
            <person name="Danchin A."/>
            <person name="Diard M."/>
            <person name="Dossat C."/>
            <person name="Karoui M.E."/>
            <person name="Frapy E."/>
            <person name="Garry L."/>
            <person name="Ghigo J.M."/>
            <person name="Gilles A.M."/>
            <person name="Johnson J."/>
            <person name="Le Bouguenec C."/>
            <person name="Lescat M."/>
            <person name="Mangenot S."/>
            <person name="Martinez-Jehanne V."/>
            <person name="Matic I."/>
            <person name="Nassif X."/>
            <person name="Oztas S."/>
            <person name="Petit M.A."/>
            <person name="Pichon C."/>
            <person name="Rouy Z."/>
            <person name="Ruf C.S."/>
            <person name="Schneider D."/>
            <person name="Tourret J."/>
            <person name="Vacherie B."/>
            <person name="Vallenet D."/>
            <person name="Medigue C."/>
            <person name="Rocha E.P.C."/>
            <person name="Denamur E."/>
        </authorList>
    </citation>
    <scope>NUCLEOTIDE SEQUENCE [LARGE SCALE GENOMIC DNA]</scope>
    <source>
        <strain>S88 / ExPEC</strain>
    </source>
</reference>
<protein>
    <recommendedName>
        <fullName evidence="1">4-deoxy-L-threo-5-hexosulose-uronate ketol-isomerase</fullName>
        <ecNumber evidence="1">5.3.1.17</ecNumber>
    </recommendedName>
    <alternativeName>
        <fullName evidence="1">5-keto-4-deoxyuronate isomerase</fullName>
    </alternativeName>
    <alternativeName>
        <fullName evidence="1">DKI isomerase</fullName>
    </alternativeName>
</protein>
<gene>
    <name evidence="1" type="primary">kduI</name>
    <name type="ordered locus">ECS88_3140</name>
</gene>
<comment type="function">
    <text evidence="1">Catalyzes the isomerization of 5-dehydro-4-deoxy-D-glucuronate to 3-deoxy-D-glycero-2,5-hexodiulosonate.</text>
</comment>
<comment type="catalytic activity">
    <reaction evidence="1">
        <text>5-dehydro-4-deoxy-D-glucuronate = 3-deoxy-D-glycero-2,5-hexodiulosonate</text>
        <dbReference type="Rhea" id="RHEA:23896"/>
        <dbReference type="ChEBI" id="CHEBI:17117"/>
        <dbReference type="ChEBI" id="CHEBI:29071"/>
        <dbReference type="EC" id="5.3.1.17"/>
    </reaction>
</comment>
<comment type="cofactor">
    <cofactor evidence="1">
        <name>Zn(2+)</name>
        <dbReference type="ChEBI" id="CHEBI:29105"/>
    </cofactor>
    <text evidence="1">Binds 1 zinc ion per subunit.</text>
</comment>
<comment type="pathway">
    <text evidence="1">Glycan metabolism; pectin degradation; 2-dehydro-3-deoxy-D-gluconate from pectin: step 4/5.</text>
</comment>
<comment type="subunit">
    <text evidence="1">Homohexamer.</text>
</comment>
<comment type="similarity">
    <text evidence="1">Belongs to the KduI family.</text>
</comment>
<sequence>MDVRQSIHSAHAKTLDTQGLRNEFLVEKVFVADEYTMVYSHIDRIIVGGIMPVTKTVSVGGEVGKQLGVSYFLERRELGVINIGGAGTITVDGQCYEIGHRDALYVGKGAKEVVFASIDTATPAKFYYNCAPAHTTYPTKKVTPDEVSPVTLGDNLTSNRRTINKYFVPDVLETCQLSMGLTELAPGNLWNTMPCHTHERRMEVYFYFNMDDDACVFHMMGQPQETRHIVMHNEQAVISPSWSIHSGVGTKAYTFIWGMVGENQVFDDMDHVAVKDLR</sequence>
<organism>
    <name type="scientific">Escherichia coli O45:K1 (strain S88 / ExPEC)</name>
    <dbReference type="NCBI Taxonomy" id="585035"/>
    <lineage>
        <taxon>Bacteria</taxon>
        <taxon>Pseudomonadati</taxon>
        <taxon>Pseudomonadota</taxon>
        <taxon>Gammaproteobacteria</taxon>
        <taxon>Enterobacterales</taxon>
        <taxon>Enterobacteriaceae</taxon>
        <taxon>Escherichia</taxon>
    </lineage>
</organism>
<accession>B7MM49</accession>
<evidence type="ECO:0000255" key="1">
    <source>
        <dbReference type="HAMAP-Rule" id="MF_00687"/>
    </source>
</evidence>
<name>KDUI_ECO45</name>